<gene>
    <name evidence="1" type="primary">ezrA</name>
    <name type="ordered locus">SAB1576c</name>
</gene>
<proteinExistence type="inferred from homology"/>
<feature type="chain" id="PRO_1000045904" description="Septation ring formation regulator EzrA">
    <location>
        <begin position="1"/>
        <end position="564"/>
    </location>
</feature>
<feature type="topological domain" description="Extracellular" evidence="1">
    <location>
        <begin position="1"/>
        <end position="4"/>
    </location>
</feature>
<feature type="transmembrane region" description="Helical" evidence="1">
    <location>
        <begin position="5"/>
        <end position="23"/>
    </location>
</feature>
<feature type="topological domain" description="Cytoplasmic" evidence="1">
    <location>
        <begin position="24"/>
        <end position="564"/>
    </location>
</feature>
<feature type="coiled-coil region" evidence="1">
    <location>
        <begin position="99"/>
        <end position="138"/>
    </location>
</feature>
<feature type="coiled-coil region" evidence="1">
    <location>
        <begin position="190"/>
        <end position="223"/>
    </location>
</feature>
<feature type="coiled-coil region" evidence="1">
    <location>
        <begin position="271"/>
        <end position="300"/>
    </location>
</feature>
<feature type="coiled-coil region" evidence="1">
    <location>
        <begin position="350"/>
        <end position="435"/>
    </location>
</feature>
<feature type="coiled-coil region" evidence="1">
    <location>
        <begin position="471"/>
        <end position="550"/>
    </location>
</feature>
<organism>
    <name type="scientific">Staphylococcus aureus (strain bovine RF122 / ET3-1)</name>
    <dbReference type="NCBI Taxonomy" id="273036"/>
    <lineage>
        <taxon>Bacteria</taxon>
        <taxon>Bacillati</taxon>
        <taxon>Bacillota</taxon>
        <taxon>Bacilli</taxon>
        <taxon>Bacillales</taxon>
        <taxon>Staphylococcaceae</taxon>
        <taxon>Staphylococcus</taxon>
    </lineage>
</organism>
<name>EZRA_STAAB</name>
<keyword id="KW-0131">Cell cycle</keyword>
<keyword id="KW-0132">Cell division</keyword>
<keyword id="KW-1003">Cell membrane</keyword>
<keyword id="KW-0175">Coiled coil</keyword>
<keyword id="KW-0472">Membrane</keyword>
<keyword id="KW-0717">Septation</keyword>
<keyword id="KW-0812">Transmembrane</keyword>
<keyword id="KW-1133">Transmembrane helix</keyword>
<evidence type="ECO:0000255" key="1">
    <source>
        <dbReference type="HAMAP-Rule" id="MF_00728"/>
    </source>
</evidence>
<accession>Q2YTH2</accession>
<comment type="function">
    <text evidence="1">Negative regulator of FtsZ ring formation; modulates the frequency and position of FtsZ ring formation. Inhibits FtsZ ring formation at polar sites. Interacts either with FtsZ or with one of its binding partners to promote depolymerization.</text>
</comment>
<comment type="subcellular location">
    <subcellularLocation>
        <location evidence="1">Cell membrane</location>
        <topology evidence="1">Single-pass membrane protein</topology>
    </subcellularLocation>
    <text evidence="1">Colocalized with FtsZ to the nascent septal site.</text>
</comment>
<comment type="similarity">
    <text evidence="1">Belongs to the EzrA family.</text>
</comment>
<dbReference type="EMBL" id="AJ938182">
    <property type="protein sequence ID" value="CAI81265.1"/>
    <property type="molecule type" value="Genomic_DNA"/>
</dbReference>
<dbReference type="RefSeq" id="WP_000244865.1">
    <property type="nucleotide sequence ID" value="NC_007622.1"/>
</dbReference>
<dbReference type="SMR" id="Q2YTH2"/>
<dbReference type="KEGG" id="sab:SAB1576c"/>
<dbReference type="HOGENOM" id="CLU_034079_1_0_9"/>
<dbReference type="GO" id="GO:0005886">
    <property type="term" value="C:plasma membrane"/>
    <property type="evidence" value="ECO:0007669"/>
    <property type="project" value="UniProtKB-SubCell"/>
</dbReference>
<dbReference type="GO" id="GO:0005940">
    <property type="term" value="C:septin ring"/>
    <property type="evidence" value="ECO:0007669"/>
    <property type="project" value="InterPro"/>
</dbReference>
<dbReference type="GO" id="GO:0000917">
    <property type="term" value="P:division septum assembly"/>
    <property type="evidence" value="ECO:0007669"/>
    <property type="project" value="UniProtKB-KW"/>
</dbReference>
<dbReference type="GO" id="GO:0000921">
    <property type="term" value="P:septin ring assembly"/>
    <property type="evidence" value="ECO:0007669"/>
    <property type="project" value="InterPro"/>
</dbReference>
<dbReference type="HAMAP" id="MF_00728">
    <property type="entry name" value="EzrA"/>
    <property type="match status" value="1"/>
</dbReference>
<dbReference type="InterPro" id="IPR010379">
    <property type="entry name" value="EzrA"/>
</dbReference>
<dbReference type="NCBIfam" id="NF003412">
    <property type="entry name" value="PRK04778.1-6"/>
    <property type="match status" value="1"/>
</dbReference>
<dbReference type="Pfam" id="PF06160">
    <property type="entry name" value="EzrA"/>
    <property type="match status" value="1"/>
</dbReference>
<sequence length="564" mass="66200">MVLYIILAIIVIILIAVGVLFYLRSNKRQIIEKAIERKNEIETLPFDQNLAQLSKLNLKGETKTKYDAMKKDNVESTNKYLAPVEEKIHNAEALLDKFSFNASQSEIDDANELMDSYEQSYQQQLEDVNEIIALYKDNDELYDKCKVDYREMKRDVLANRHQFGEAASLLETEIEKFEPRLEQYEVLKADGNYVQAHNHIAALNEQMKQLRSYMEEIPELIRETQKELPGQFQDLKYGCRDLKVEGYDLDHVKVDSTLQSLKTELSFVEPLISRLELEEANDKLANINDKLDDMYDLIEHEVKAKNDVEETKDIITDNLFKAKDMNYTLQTEIEYVRENYYINESDAQSVRQFENEIQSLISVYDDILKEMSKSAVRYSEVQDNLQYLEDHVTVINDKQEKLQNHLIQLREDEAEAEDNLLRVQSKKEEVYRRLLASNLTSVPERFIIMKNEIDHEVRDVNEQFSERPIHVKQLKDKVSKIVIQMNTFEDEANDVLVNAVYAEKLIQYGNRYRKDYSNVDKSLNEAERLFKNNRYKRAIEIAEQALESVEPGVTKHIEEEVIKQ</sequence>
<reference key="1">
    <citation type="journal article" date="2007" name="PLoS ONE">
        <title>Molecular correlates of host specialization in Staphylococcus aureus.</title>
        <authorList>
            <person name="Herron-Olson L."/>
            <person name="Fitzgerald J.R."/>
            <person name="Musser J.M."/>
            <person name="Kapur V."/>
        </authorList>
    </citation>
    <scope>NUCLEOTIDE SEQUENCE [LARGE SCALE GENOMIC DNA]</scope>
    <source>
        <strain>bovine RF122 / ET3-1</strain>
    </source>
</reference>
<protein>
    <recommendedName>
        <fullName evidence="1">Septation ring formation regulator EzrA</fullName>
    </recommendedName>
</protein>